<reference key="1">
    <citation type="submission" date="2007-09" db="EMBL/GenBank/DDBJ databases">
        <title>Complete genome sequencing of Rickettsia bellii.</title>
        <authorList>
            <person name="Madan A."/>
            <person name="Lee H."/>
            <person name="Madan A."/>
            <person name="Yoon J.-G."/>
            <person name="Ryu G.-Y."/>
            <person name="Dasch G."/>
            <person name="Ereemeva M."/>
        </authorList>
    </citation>
    <scope>NUCLEOTIDE SEQUENCE [LARGE SCALE GENOMIC DNA]</scope>
    <source>
        <strain>OSU 85-389</strain>
    </source>
</reference>
<protein>
    <recommendedName>
        <fullName evidence="1">Beta-ketoacyl-[acyl-carrier-protein] synthase III</fullName>
        <shortName evidence="1">Beta-ketoacyl-ACP synthase III</shortName>
        <shortName evidence="1">KAS III</shortName>
        <ecNumber evidence="1">2.3.1.180</ecNumber>
    </recommendedName>
    <alternativeName>
        <fullName evidence="1">3-oxoacyl-[acyl-carrier-protein] synthase 3</fullName>
    </alternativeName>
    <alternativeName>
        <fullName evidence="1">3-oxoacyl-[acyl-carrier-protein] synthase III</fullName>
    </alternativeName>
</protein>
<proteinExistence type="inferred from homology"/>
<organism>
    <name type="scientific">Rickettsia bellii (strain OSU 85-389)</name>
    <dbReference type="NCBI Taxonomy" id="391896"/>
    <lineage>
        <taxon>Bacteria</taxon>
        <taxon>Pseudomonadati</taxon>
        <taxon>Pseudomonadota</taxon>
        <taxon>Alphaproteobacteria</taxon>
        <taxon>Rickettsiales</taxon>
        <taxon>Rickettsiaceae</taxon>
        <taxon>Rickettsieae</taxon>
        <taxon>Rickettsia</taxon>
        <taxon>belli group</taxon>
    </lineage>
</organism>
<comment type="function">
    <text evidence="1">Catalyzes the condensation reaction of fatty acid synthesis by the addition to an acyl acceptor of two carbons from malonyl-ACP. Catalyzes the first condensation reaction which initiates fatty acid synthesis and may therefore play a role in governing the total rate of fatty acid production. Possesses both acetoacetyl-ACP synthase and acetyl transacylase activities. Its substrate specificity determines the biosynthesis of branched-chain and/or straight-chain of fatty acids.</text>
</comment>
<comment type="catalytic activity">
    <reaction evidence="1">
        <text>malonyl-[ACP] + acetyl-CoA + H(+) = 3-oxobutanoyl-[ACP] + CO2 + CoA</text>
        <dbReference type="Rhea" id="RHEA:12080"/>
        <dbReference type="Rhea" id="RHEA-COMP:9623"/>
        <dbReference type="Rhea" id="RHEA-COMP:9625"/>
        <dbReference type="ChEBI" id="CHEBI:15378"/>
        <dbReference type="ChEBI" id="CHEBI:16526"/>
        <dbReference type="ChEBI" id="CHEBI:57287"/>
        <dbReference type="ChEBI" id="CHEBI:57288"/>
        <dbReference type="ChEBI" id="CHEBI:78449"/>
        <dbReference type="ChEBI" id="CHEBI:78450"/>
        <dbReference type="EC" id="2.3.1.180"/>
    </reaction>
</comment>
<comment type="pathway">
    <text evidence="1">Lipid metabolism; fatty acid biosynthesis.</text>
</comment>
<comment type="subunit">
    <text evidence="1">Homodimer.</text>
</comment>
<comment type="subcellular location">
    <subcellularLocation>
        <location evidence="1">Cytoplasm</location>
    </subcellularLocation>
</comment>
<comment type="domain">
    <text evidence="1">The last Arg residue of the ACP-binding site is essential for the weak association between ACP/AcpP and FabH.</text>
</comment>
<comment type="similarity">
    <text evidence="1">Belongs to the thiolase-like superfamily. FabH family.</text>
</comment>
<gene>
    <name evidence="1" type="primary">fabH</name>
    <name type="ordered locus">A1I_07280</name>
</gene>
<accession>A8GY06</accession>
<name>FABH_RICB8</name>
<feature type="chain" id="PRO_1000056399" description="Beta-ketoacyl-[acyl-carrier-protein] synthase III">
    <location>
        <begin position="1"/>
        <end position="317"/>
    </location>
</feature>
<feature type="region of interest" description="ACP-binding" evidence="1">
    <location>
        <begin position="245"/>
        <end position="249"/>
    </location>
</feature>
<feature type="active site" evidence="1">
    <location>
        <position position="112"/>
    </location>
</feature>
<feature type="active site" evidence="1">
    <location>
        <position position="244"/>
    </location>
</feature>
<feature type="active site" evidence="1">
    <location>
        <position position="274"/>
    </location>
</feature>
<keyword id="KW-0012">Acyltransferase</keyword>
<keyword id="KW-0963">Cytoplasm</keyword>
<keyword id="KW-0275">Fatty acid biosynthesis</keyword>
<keyword id="KW-0276">Fatty acid metabolism</keyword>
<keyword id="KW-0444">Lipid biosynthesis</keyword>
<keyword id="KW-0443">Lipid metabolism</keyword>
<keyword id="KW-0511">Multifunctional enzyme</keyword>
<keyword id="KW-0808">Transferase</keyword>
<dbReference type="EC" id="2.3.1.180" evidence="1"/>
<dbReference type="EMBL" id="CP000849">
    <property type="protein sequence ID" value="ABV79756.1"/>
    <property type="molecule type" value="Genomic_DNA"/>
</dbReference>
<dbReference type="RefSeq" id="WP_012152234.1">
    <property type="nucleotide sequence ID" value="NC_009883.1"/>
</dbReference>
<dbReference type="SMR" id="A8GY06"/>
<dbReference type="KEGG" id="rbo:A1I_07280"/>
<dbReference type="HOGENOM" id="CLU_039592_3_1_5"/>
<dbReference type="UniPathway" id="UPA00094"/>
<dbReference type="GO" id="GO:0005737">
    <property type="term" value="C:cytoplasm"/>
    <property type="evidence" value="ECO:0007669"/>
    <property type="project" value="UniProtKB-SubCell"/>
</dbReference>
<dbReference type="GO" id="GO:0004315">
    <property type="term" value="F:3-oxoacyl-[acyl-carrier-protein] synthase activity"/>
    <property type="evidence" value="ECO:0007669"/>
    <property type="project" value="InterPro"/>
</dbReference>
<dbReference type="GO" id="GO:0033818">
    <property type="term" value="F:beta-ketoacyl-acyl-carrier-protein synthase III activity"/>
    <property type="evidence" value="ECO:0007669"/>
    <property type="project" value="UniProtKB-UniRule"/>
</dbReference>
<dbReference type="GO" id="GO:0006633">
    <property type="term" value="P:fatty acid biosynthetic process"/>
    <property type="evidence" value="ECO:0007669"/>
    <property type="project" value="UniProtKB-UniRule"/>
</dbReference>
<dbReference type="CDD" id="cd00830">
    <property type="entry name" value="KAS_III"/>
    <property type="match status" value="1"/>
</dbReference>
<dbReference type="FunFam" id="3.40.47.10:FF:000004">
    <property type="entry name" value="3-oxoacyl-[acyl-carrier-protein] synthase 3"/>
    <property type="match status" value="1"/>
</dbReference>
<dbReference type="Gene3D" id="3.40.47.10">
    <property type="match status" value="1"/>
</dbReference>
<dbReference type="HAMAP" id="MF_01815">
    <property type="entry name" value="FabH"/>
    <property type="match status" value="1"/>
</dbReference>
<dbReference type="InterPro" id="IPR013747">
    <property type="entry name" value="ACP_syn_III_C"/>
</dbReference>
<dbReference type="InterPro" id="IPR013751">
    <property type="entry name" value="ACP_syn_III_N"/>
</dbReference>
<dbReference type="InterPro" id="IPR004655">
    <property type="entry name" value="FabH"/>
</dbReference>
<dbReference type="InterPro" id="IPR016039">
    <property type="entry name" value="Thiolase-like"/>
</dbReference>
<dbReference type="NCBIfam" id="TIGR00747">
    <property type="entry name" value="fabH"/>
    <property type="match status" value="1"/>
</dbReference>
<dbReference type="NCBIfam" id="NF006829">
    <property type="entry name" value="PRK09352.1"/>
    <property type="match status" value="1"/>
</dbReference>
<dbReference type="PANTHER" id="PTHR43091">
    <property type="entry name" value="3-OXOACYL-[ACYL-CARRIER-PROTEIN] SYNTHASE"/>
    <property type="match status" value="1"/>
</dbReference>
<dbReference type="PANTHER" id="PTHR43091:SF1">
    <property type="entry name" value="BETA-KETOACYL-[ACYL-CARRIER-PROTEIN] SYNTHASE III, CHLOROPLASTIC"/>
    <property type="match status" value="1"/>
</dbReference>
<dbReference type="Pfam" id="PF08545">
    <property type="entry name" value="ACP_syn_III"/>
    <property type="match status" value="1"/>
</dbReference>
<dbReference type="Pfam" id="PF08541">
    <property type="entry name" value="ACP_syn_III_C"/>
    <property type="match status" value="1"/>
</dbReference>
<dbReference type="SUPFAM" id="SSF53901">
    <property type="entry name" value="Thiolase-like"/>
    <property type="match status" value="1"/>
</dbReference>
<evidence type="ECO:0000255" key="1">
    <source>
        <dbReference type="HAMAP-Rule" id="MF_01815"/>
    </source>
</evidence>
<sequence length="317" mass="34307">MTCKIIGCGGYLPPKVVSNDELAKFVDTNDEWIRTRTGISQRHIAGDTEYTSHIALKAAEKAIADADISVNEIDLIITCTTTPDNSFPSVATKLQSYLGLNNVPSFDLQAVCAGFVYGVQVANSLISSGKYKTILLIGAEKMTSLLDWEDRATCVLFGDGAGSVILQRSDDNSGIIDSNIFSSGADYEILYTNGGVSMNGSSGKIIMQGQKLFRLAVEKMHQSIEELLRNNNFTVNDIDYFIPHQANVRIINKLAELLNVEDHKVVKTVEKHANCSAASIPLALSTIKASGKIKKGDIILFSAIGAGLTWGSALLRW</sequence>